<feature type="chain" id="PRO_0000458706" description="Receptor-recognizing protein gp38">
    <location>
        <begin position="1"/>
        <end position="249"/>
    </location>
</feature>
<feature type="short sequence motif" description="GRM 1" evidence="2">
    <location>
        <begin position="114"/>
        <end position="121"/>
    </location>
</feature>
<feature type="short sequence motif" description="GRM 2" evidence="2">
    <location>
        <begin position="124"/>
        <end position="131"/>
    </location>
</feature>
<feature type="short sequence motif" description="GRM 3" evidence="2">
    <location>
        <begin position="151"/>
        <end position="161"/>
    </location>
</feature>
<feature type="short sequence motif" description="GRM 4" evidence="2">
    <location>
        <begin position="164"/>
        <end position="172"/>
    </location>
</feature>
<feature type="short sequence motif" description="GRM 5" evidence="2">
    <location>
        <begin position="175"/>
        <end position="181"/>
    </location>
</feature>
<feature type="short sequence motif" description="GRM 6" evidence="2">
    <location>
        <begin position="184"/>
        <end position="190"/>
    </location>
</feature>
<feature type="short sequence motif" description="GRM 7" evidence="2">
    <location>
        <begin position="192"/>
        <end position="199"/>
    </location>
</feature>
<feature type="short sequence motif" description="GRM 8" evidence="2">
    <location>
        <begin position="204"/>
        <end position="210"/>
    </location>
</feature>
<feature type="short sequence motif" description="GRM 9" evidence="2">
    <location>
        <begin position="213"/>
        <end position="218"/>
    </location>
</feature>
<feature type="short sequence motif" description="GRM 10" evidence="2">
    <location>
        <begin position="222"/>
        <end position="229"/>
    </location>
</feature>
<feature type="site" description="Interaction with the fiber protein p37" evidence="2">
    <location>
        <position position="7"/>
    </location>
</feature>
<feature type="site" description="Interaction with the fiber protein p37" evidence="2">
    <location>
        <position position="20"/>
    </location>
</feature>
<feature type="site" description="Interaction with the fiber protein p37" evidence="2">
    <location>
        <position position="36"/>
    </location>
</feature>
<feature type="helix" evidence="6">
    <location>
        <begin position="8"/>
        <end position="16"/>
    </location>
</feature>
<feature type="helix" evidence="6">
    <location>
        <begin position="21"/>
        <end position="27"/>
    </location>
</feature>
<feature type="strand" evidence="6">
    <location>
        <begin position="33"/>
        <end position="36"/>
    </location>
</feature>
<feature type="helix" evidence="6">
    <location>
        <begin position="37"/>
        <end position="40"/>
    </location>
</feature>
<feature type="strand" evidence="6">
    <location>
        <begin position="47"/>
        <end position="51"/>
    </location>
</feature>
<feature type="strand" evidence="6">
    <location>
        <begin position="55"/>
        <end position="58"/>
    </location>
</feature>
<feature type="helix" evidence="6">
    <location>
        <begin position="60"/>
        <end position="69"/>
    </location>
</feature>
<feature type="turn" evidence="6">
    <location>
        <begin position="70"/>
        <end position="72"/>
    </location>
</feature>
<feature type="strand" evidence="6">
    <location>
        <begin position="75"/>
        <end position="79"/>
    </location>
</feature>
<feature type="strand" evidence="6">
    <location>
        <begin position="83"/>
        <end position="86"/>
    </location>
</feature>
<feature type="strand" evidence="6">
    <location>
        <begin position="92"/>
        <end position="95"/>
    </location>
</feature>
<feature type="strand" evidence="6">
    <location>
        <begin position="104"/>
        <end position="108"/>
    </location>
</feature>
<feature type="strand" evidence="6">
    <location>
        <begin position="110"/>
        <end position="113"/>
    </location>
</feature>
<feature type="strand" evidence="6">
    <location>
        <begin position="132"/>
        <end position="135"/>
    </location>
</feature>
<feature type="helix" evidence="6">
    <location>
        <begin position="138"/>
        <end position="140"/>
    </location>
</feature>
<feature type="strand" evidence="6">
    <location>
        <begin position="141"/>
        <end position="150"/>
    </location>
</feature>
<feature type="strand" evidence="6">
    <location>
        <begin position="159"/>
        <end position="161"/>
    </location>
</feature>
<feature type="strand" evidence="6">
    <location>
        <begin position="164"/>
        <end position="167"/>
    </location>
</feature>
<feature type="turn" evidence="6">
    <location>
        <begin position="172"/>
        <end position="174"/>
    </location>
</feature>
<feature type="strand" evidence="6">
    <location>
        <begin position="191"/>
        <end position="193"/>
    </location>
</feature>
<feature type="strand" evidence="6">
    <location>
        <begin position="230"/>
        <end position="234"/>
    </location>
</feature>
<feature type="strand" evidence="6">
    <location>
        <begin position="237"/>
        <end position="240"/>
    </location>
</feature>
<feature type="strand" evidence="6">
    <location>
        <begin position="243"/>
        <end position="246"/>
    </location>
</feature>
<sequence length="249" mass="25659">MAVQGPWVGSSYVAETGQNWASLAANELRVTERPFWISSFIGRSKEEIWEWTGENHSFNKDWLIGELRNRGGTPVVINIRAHQVSYTPGAPLFEFPGDLPNAYITLNIYADIYGRGGTGGVAYLGGNPGGDCIHNWIGNRLRINNQGWICGGGGGGGGFRVGHTEAGGGGGRPLGAGGVSSLNLNGDNATLGAPGRGYQLGNDYAGNGGDVGNPGSASSAEMGGGAAGRAVVGTSPQWINVGNIAGSWL</sequence>
<organismHost>
    <name type="scientific">Salmonella enterica</name>
    <name type="common">Salmonella choleraesuis</name>
    <dbReference type="NCBI Taxonomy" id="28901"/>
</organismHost>
<keyword id="KW-0002">3D-structure</keyword>
<keyword id="KW-0945">Host-virus interaction</keyword>
<keyword id="KW-0675">Receptor</keyword>
<keyword id="KW-1185">Reference proteome</keyword>
<keyword id="KW-1161">Viral attachment to host cell</keyword>
<keyword id="KW-1227">Viral tail protein</keyword>
<keyword id="KW-0946">Virion</keyword>
<keyword id="KW-1160">Virus entry into host cell</keyword>
<reference key="1">
    <citation type="journal article" date="2013" name="Mol. Microbiol.">
        <title>Long tail fibres of the novel broad-host-range T-even bacteriophage S16 specifically recognize Salmonella OmpC.</title>
        <authorList>
            <person name="Marti R."/>
            <person name="Zurfluh K."/>
            <person name="Hagens S."/>
            <person name="Pianezzi J."/>
            <person name="Klumpp J."/>
            <person name="Loessner M.J."/>
        </authorList>
    </citation>
    <scope>NUCLEOTIDE SEQUENCE [LARGE SCALE GENOMIC DNA]</scope>
    <scope>INTERACTION WITH HOST RECEPTOR OMPC</scope>
</reference>
<reference evidence="5" key="2">
    <citation type="journal article" date="2018" name="Structure">
        <title>Salmonella Phage S16 Tail Fiber Adhesin Features a Rare Polyglycine Rich Domain for Host Recognition.</title>
        <authorList>
            <person name="Dunne M."/>
            <person name="Denyes J.M."/>
            <person name="Arndt H."/>
            <person name="Loessner M.J."/>
            <person name="Leiman P.G."/>
            <person name="Klumpp J."/>
        </authorList>
    </citation>
    <scope>X-RAY CRYSTALLOGRAPHY (1.70 ANGSTROMS) OF 567-749</scope>
    <scope>FUNCTION</scope>
    <scope>DOMAIN</scope>
    <scope>SUBCELLULAR LOCATION</scope>
    <scope>INTERACTION WITH HOST OMPC</scope>
</reference>
<accession>M1EBB2</accession>
<evidence type="ECO:0000269" key="1">
    <source>
    </source>
</evidence>
<evidence type="ECO:0000269" key="2">
    <source>
    </source>
</evidence>
<evidence type="ECO:0000303" key="3">
    <source>
    </source>
</evidence>
<evidence type="ECO:0000305" key="4"/>
<evidence type="ECO:0007744" key="5">
    <source>
        <dbReference type="PDB" id="6F45"/>
    </source>
</evidence>
<evidence type="ECO:0007829" key="6">
    <source>
        <dbReference type="PDB" id="6F45"/>
    </source>
</evidence>
<name>RBP_BPS16</name>
<organism>
    <name type="scientific">Salmonella phage S16</name>
    <name type="common">Salmonella phage vB_SenM-S16</name>
    <dbReference type="NCBI Taxonomy" id="1087482"/>
    <lineage>
        <taxon>Viruses</taxon>
        <taxon>Duplodnaviria</taxon>
        <taxon>Heunggongvirae</taxon>
        <taxon>Uroviricota</taxon>
        <taxon>Caudoviricetes</taxon>
        <taxon>Straboviridae</taxon>
        <taxon>Tevenvirinae</taxon>
        <taxon>Gelderlandvirus</taxon>
        <taxon>Gelderlandvirus s16</taxon>
    </lineage>
</organism>
<comment type="function">
    <text evidence="2">Receptor binding protein (RBP) that is at the tip of the long tail fibers and serves as the phage recognition site for the attachment host receptor OmpC.</text>
</comment>
<comment type="subunit">
    <text evidence="1 2">Interacts with host OmpC receptor; this interaction allows the reversible adsorption of the phage on the host membrane.</text>
</comment>
<comment type="subcellular location">
    <subcellularLocation>
        <location evidence="2">Virion</location>
    </subcellularLocation>
    <text evidence="2">Forms the distal tip of the long tail fiber.</text>
</comment>
<comment type="domain">
    <text evidence="2">The N-terminus is involved in binding to the fiber protein p37 (PubMed:30244968). The C-terminus contains glycine-rich motifs (GRM) and mediates the host specificity (PubMed:30244968). The glycine-rich motifs assemble into a 3-layered PG(II) sandwich domain (PubMed:30244968).</text>
</comment>
<comment type="similarity">
    <text evidence="4">Belongs to the S16-like receptor-recognizing protein gp38 family.</text>
</comment>
<protein>
    <recommendedName>
        <fullName evidence="3">Receptor-recognizing protein gp38</fullName>
    </recommendedName>
    <alternativeName>
        <fullName>Gene product 38</fullName>
        <shortName evidence="3">gp38</shortName>
    </alternativeName>
    <alternativeName>
        <fullName evidence="3">Long tail fiber adhesin</fullName>
    </alternativeName>
</protein>
<dbReference type="EMBL" id="HQ331142">
    <property type="protein sequence ID" value="AEO97173.1"/>
    <property type="molecule type" value="Genomic_DNA"/>
</dbReference>
<dbReference type="RefSeq" id="YP_007501289.1">
    <property type="nucleotide sequence ID" value="NC_020416.1"/>
</dbReference>
<dbReference type="PDB" id="6F45">
    <property type="method" value="X-ray"/>
    <property type="resolution" value="1.70 A"/>
    <property type="chains" value="D=1-249"/>
</dbReference>
<dbReference type="PDBsum" id="6F45"/>
<dbReference type="SMR" id="M1EBB2"/>
<dbReference type="GeneID" id="14675490"/>
<dbReference type="KEGG" id="vg:14675490"/>
<dbReference type="OrthoDB" id="11473at10239"/>
<dbReference type="Proteomes" id="UP000011284">
    <property type="component" value="Genome"/>
</dbReference>
<dbReference type="GO" id="GO:0098015">
    <property type="term" value="C:virus tail"/>
    <property type="evidence" value="ECO:0007669"/>
    <property type="project" value="UniProtKB-KW"/>
</dbReference>
<dbReference type="GO" id="GO:0098671">
    <property type="term" value="P:adhesion receptor-mediated virion attachment to host cell"/>
    <property type="evidence" value="ECO:0007669"/>
    <property type="project" value="UniProtKB-ARBA"/>
</dbReference>
<dbReference type="GO" id="GO:0046718">
    <property type="term" value="P:symbiont entry into host cell"/>
    <property type="evidence" value="ECO:0007669"/>
    <property type="project" value="UniProtKB-KW"/>
</dbReference>
<dbReference type="InterPro" id="IPR048291">
    <property type="entry name" value="Gp38_N"/>
</dbReference>
<dbReference type="InterPro" id="IPR007932">
    <property type="entry name" value="Receptor-recog_Gp38"/>
</dbReference>
<dbReference type="Pfam" id="PF05268">
    <property type="entry name" value="GP38"/>
    <property type="match status" value="1"/>
</dbReference>
<dbReference type="Pfam" id="PF21721">
    <property type="entry name" value="Gp38_N"/>
    <property type="match status" value="1"/>
</dbReference>
<proteinExistence type="evidence at protein level"/>